<dbReference type="EC" id="2.1.1.228" evidence="1"/>
<dbReference type="EMBL" id="AP009049">
    <property type="protein sequence ID" value="BAH06352.1"/>
    <property type="molecule type" value="Genomic_DNA"/>
</dbReference>
<dbReference type="RefSeq" id="WP_012101794.1">
    <property type="nucleotide sequence ID" value="NC_011837.1"/>
</dbReference>
<dbReference type="SMR" id="B9E1H7"/>
<dbReference type="KEGG" id="ckr:CKR_1301"/>
<dbReference type="HOGENOM" id="CLU_047363_0_1_9"/>
<dbReference type="Proteomes" id="UP000007969">
    <property type="component" value="Chromosome"/>
</dbReference>
<dbReference type="GO" id="GO:0005829">
    <property type="term" value="C:cytosol"/>
    <property type="evidence" value="ECO:0007669"/>
    <property type="project" value="TreeGrafter"/>
</dbReference>
<dbReference type="GO" id="GO:0052906">
    <property type="term" value="F:tRNA (guanine(37)-N1)-methyltransferase activity"/>
    <property type="evidence" value="ECO:0007669"/>
    <property type="project" value="UniProtKB-UniRule"/>
</dbReference>
<dbReference type="GO" id="GO:0002939">
    <property type="term" value="P:tRNA N1-guanine methylation"/>
    <property type="evidence" value="ECO:0007669"/>
    <property type="project" value="TreeGrafter"/>
</dbReference>
<dbReference type="CDD" id="cd18080">
    <property type="entry name" value="TrmD-like"/>
    <property type="match status" value="1"/>
</dbReference>
<dbReference type="FunFam" id="1.10.1270.20:FF:000001">
    <property type="entry name" value="tRNA (guanine-N(1)-)-methyltransferase"/>
    <property type="match status" value="1"/>
</dbReference>
<dbReference type="FunFam" id="3.40.1280.10:FF:000001">
    <property type="entry name" value="tRNA (guanine-N(1)-)-methyltransferase"/>
    <property type="match status" value="1"/>
</dbReference>
<dbReference type="Gene3D" id="3.40.1280.10">
    <property type="match status" value="1"/>
</dbReference>
<dbReference type="Gene3D" id="1.10.1270.20">
    <property type="entry name" value="tRNA(m1g37)methyltransferase, domain 2"/>
    <property type="match status" value="1"/>
</dbReference>
<dbReference type="HAMAP" id="MF_00605">
    <property type="entry name" value="TrmD"/>
    <property type="match status" value="1"/>
</dbReference>
<dbReference type="InterPro" id="IPR029028">
    <property type="entry name" value="Alpha/beta_knot_MTases"/>
</dbReference>
<dbReference type="InterPro" id="IPR023148">
    <property type="entry name" value="tRNA_m1G_MeTrfase_C_sf"/>
</dbReference>
<dbReference type="InterPro" id="IPR002649">
    <property type="entry name" value="tRNA_m1G_MeTrfase_TrmD"/>
</dbReference>
<dbReference type="InterPro" id="IPR029026">
    <property type="entry name" value="tRNA_m1G_MTases_N"/>
</dbReference>
<dbReference type="InterPro" id="IPR016009">
    <property type="entry name" value="tRNA_MeTrfase_TRMD/TRM10"/>
</dbReference>
<dbReference type="NCBIfam" id="NF000648">
    <property type="entry name" value="PRK00026.1"/>
    <property type="match status" value="1"/>
</dbReference>
<dbReference type="NCBIfam" id="TIGR00088">
    <property type="entry name" value="trmD"/>
    <property type="match status" value="1"/>
</dbReference>
<dbReference type="PANTHER" id="PTHR46417">
    <property type="entry name" value="TRNA (GUANINE-N(1)-)-METHYLTRANSFERASE"/>
    <property type="match status" value="1"/>
</dbReference>
<dbReference type="PANTHER" id="PTHR46417:SF1">
    <property type="entry name" value="TRNA (GUANINE-N(1)-)-METHYLTRANSFERASE"/>
    <property type="match status" value="1"/>
</dbReference>
<dbReference type="Pfam" id="PF01746">
    <property type="entry name" value="tRNA_m1G_MT"/>
    <property type="match status" value="1"/>
</dbReference>
<dbReference type="PIRSF" id="PIRSF000386">
    <property type="entry name" value="tRNA_mtase"/>
    <property type="match status" value="1"/>
</dbReference>
<dbReference type="SUPFAM" id="SSF75217">
    <property type="entry name" value="alpha/beta knot"/>
    <property type="match status" value="1"/>
</dbReference>
<name>TRMD_CLOK1</name>
<accession>B9E1H7</accession>
<feature type="chain" id="PRO_1000198565" description="tRNA (guanine-N(1)-)-methyltransferase">
    <location>
        <begin position="1"/>
        <end position="244"/>
    </location>
</feature>
<feature type="binding site" evidence="1">
    <location>
        <position position="112"/>
    </location>
    <ligand>
        <name>S-adenosyl-L-methionine</name>
        <dbReference type="ChEBI" id="CHEBI:59789"/>
    </ligand>
</feature>
<feature type="binding site" evidence="1">
    <location>
        <begin position="131"/>
        <end position="136"/>
    </location>
    <ligand>
        <name>S-adenosyl-L-methionine</name>
        <dbReference type="ChEBI" id="CHEBI:59789"/>
    </ligand>
</feature>
<organism>
    <name type="scientific">Clostridium kluyveri (strain NBRC 12016)</name>
    <dbReference type="NCBI Taxonomy" id="583346"/>
    <lineage>
        <taxon>Bacteria</taxon>
        <taxon>Bacillati</taxon>
        <taxon>Bacillota</taxon>
        <taxon>Clostridia</taxon>
        <taxon>Eubacteriales</taxon>
        <taxon>Clostridiaceae</taxon>
        <taxon>Clostridium</taxon>
    </lineage>
</organism>
<protein>
    <recommendedName>
        <fullName evidence="1">tRNA (guanine-N(1)-)-methyltransferase</fullName>
        <ecNumber evidence="1">2.1.1.228</ecNumber>
    </recommendedName>
    <alternativeName>
        <fullName evidence="1">M1G-methyltransferase</fullName>
    </alternativeName>
    <alternativeName>
        <fullName evidence="1">tRNA [GM37] methyltransferase</fullName>
    </alternativeName>
</protein>
<gene>
    <name evidence="1" type="primary">trmD</name>
    <name type="ordered locus">CKR_1301</name>
</gene>
<reference key="1">
    <citation type="submission" date="2005-09" db="EMBL/GenBank/DDBJ databases">
        <title>Complete genome sequence of Clostridium kluyveri and comparative genomics of Clostridia species.</title>
        <authorList>
            <person name="Inui M."/>
            <person name="Nonaka H."/>
            <person name="Shinoda Y."/>
            <person name="Ikenaga Y."/>
            <person name="Abe M."/>
            <person name="Naito K."/>
            <person name="Vertes A.A."/>
            <person name="Yukawa H."/>
        </authorList>
    </citation>
    <scope>NUCLEOTIDE SEQUENCE [LARGE SCALE GENOMIC DNA]</scope>
    <source>
        <strain>NBRC 12016</strain>
    </source>
</reference>
<comment type="function">
    <text evidence="1">Specifically methylates guanosine-37 in various tRNAs.</text>
</comment>
<comment type="catalytic activity">
    <reaction evidence="1">
        <text>guanosine(37) in tRNA + S-adenosyl-L-methionine = N(1)-methylguanosine(37) in tRNA + S-adenosyl-L-homocysteine + H(+)</text>
        <dbReference type="Rhea" id="RHEA:36899"/>
        <dbReference type="Rhea" id="RHEA-COMP:10145"/>
        <dbReference type="Rhea" id="RHEA-COMP:10147"/>
        <dbReference type="ChEBI" id="CHEBI:15378"/>
        <dbReference type="ChEBI" id="CHEBI:57856"/>
        <dbReference type="ChEBI" id="CHEBI:59789"/>
        <dbReference type="ChEBI" id="CHEBI:73542"/>
        <dbReference type="ChEBI" id="CHEBI:74269"/>
        <dbReference type="EC" id="2.1.1.228"/>
    </reaction>
</comment>
<comment type="subunit">
    <text evidence="1">Homodimer.</text>
</comment>
<comment type="subcellular location">
    <subcellularLocation>
        <location evidence="1">Cytoplasm</location>
    </subcellularLocation>
</comment>
<comment type="similarity">
    <text evidence="1">Belongs to the RNA methyltransferase TrmD family.</text>
</comment>
<keyword id="KW-0963">Cytoplasm</keyword>
<keyword id="KW-0489">Methyltransferase</keyword>
<keyword id="KW-0949">S-adenosyl-L-methionine</keyword>
<keyword id="KW-0808">Transferase</keyword>
<keyword id="KW-0819">tRNA processing</keyword>
<proteinExistence type="inferred from homology"/>
<sequence length="244" mass="28236">MDVKIDILTLFPEMFHVFNYSIIGRAIEKNILSINTFNIRNFTENKHRKVDDYPYGGGSGMIMTAQPIVDCINSVKTQNKGNVVYLGPRGKIFDQSMAKKLSSEKELIFLCGHYEGIDERVYRYIDLEISIGDFIVTGGEMACIPIVDSICRMIPGVLSSTESYTEESFYNGVLEYPQYTRPEFFRGDRVPEVLISGHHENIRKWRRAKSFILTKNKRPDLFERIELSKEDRELIKLYENGYTD</sequence>
<evidence type="ECO:0000255" key="1">
    <source>
        <dbReference type="HAMAP-Rule" id="MF_00605"/>
    </source>
</evidence>